<organism>
    <name type="scientific">Methanoregula boonei (strain DSM 21154 / JCM 14090 / 6A8)</name>
    <dbReference type="NCBI Taxonomy" id="456442"/>
    <lineage>
        <taxon>Archaea</taxon>
        <taxon>Methanobacteriati</taxon>
        <taxon>Methanobacteriota</taxon>
        <taxon>Stenosarchaea group</taxon>
        <taxon>Methanomicrobia</taxon>
        <taxon>Methanomicrobiales</taxon>
        <taxon>Methanoregulaceae</taxon>
        <taxon>Methanoregula</taxon>
    </lineage>
</organism>
<accession>A7I912</accession>
<reference key="1">
    <citation type="journal article" date="2015" name="Microbiology">
        <title>Genome of Methanoregula boonei 6A8 reveals adaptations to oligotrophic peatland environments.</title>
        <authorList>
            <person name="Braeuer S."/>
            <person name="Cadillo-Quiroz H."/>
            <person name="Kyrpides N."/>
            <person name="Woyke T."/>
            <person name="Goodwin L."/>
            <person name="Detter C."/>
            <person name="Podell S."/>
            <person name="Yavitt J.B."/>
            <person name="Zinder S.H."/>
        </authorList>
    </citation>
    <scope>NUCLEOTIDE SEQUENCE [LARGE SCALE GENOMIC DNA]</scope>
    <source>
        <strain>DSM 21154 / JCM 14090 / 6A8</strain>
    </source>
</reference>
<sequence length="460" mass="51348">MSGRLPFEEQLLSGQLRPSAEEREYIAGVARRLLDAINASGKATGMVVGSIARNTWVKGDRDLDVFLLFSPEMPREALETEGLALARSIARAFTPMFHEKYAEHPYINANVEGIDVDLVPCYNVASAEHIQSAVDRTPFHTRYITDKINGLTDDVLLLKQFAKAGGIYGSDQMTEGFSGYLCELLVLHYGGFAPLLAAAAEWRPPVIIDIGKHAAKKFDEPLVVIDPVDPRRNVAAAVSLDRMAEFVELARGYRDAPSEEFFRIRKEYPCCPADLAALLASRGTSLYAVTFATPPFIEEIVVPQLKRSTGAISDLLDRSGFAVHHAHYRMGPGRCMLLFELIIDELPPIRRHEGPPVWNRVNAEKFREKYRTSPLPGPFIENGRYVTEVPREFTRAGDLISSPAILSVGTGRHVRESLGKDWCVLEGADCWQEEFSGFIATFFSRRSPLVRIERDRPGRE</sequence>
<dbReference type="EC" id="2.7.7.72" evidence="1"/>
<dbReference type="EMBL" id="CP000780">
    <property type="protein sequence ID" value="ABS56223.1"/>
    <property type="molecule type" value="Genomic_DNA"/>
</dbReference>
<dbReference type="RefSeq" id="WP_012107269.1">
    <property type="nucleotide sequence ID" value="NC_009712.1"/>
</dbReference>
<dbReference type="SMR" id="A7I912"/>
<dbReference type="STRING" id="456442.Mboo_1706"/>
<dbReference type="GeneID" id="5411299"/>
<dbReference type="KEGG" id="mbn:Mboo_1706"/>
<dbReference type="eggNOG" id="arCOG04249">
    <property type="taxonomic scope" value="Archaea"/>
</dbReference>
<dbReference type="HOGENOM" id="CLU_044679_1_0_2"/>
<dbReference type="OrthoDB" id="7378at2157"/>
<dbReference type="Proteomes" id="UP000002408">
    <property type="component" value="Chromosome"/>
</dbReference>
<dbReference type="GO" id="GO:0005524">
    <property type="term" value="F:ATP binding"/>
    <property type="evidence" value="ECO:0007669"/>
    <property type="project" value="UniProtKB-UniRule"/>
</dbReference>
<dbReference type="GO" id="GO:0004810">
    <property type="term" value="F:CCA tRNA nucleotidyltransferase activity"/>
    <property type="evidence" value="ECO:0007669"/>
    <property type="project" value="UniProtKB-UniRule"/>
</dbReference>
<dbReference type="GO" id="GO:0000287">
    <property type="term" value="F:magnesium ion binding"/>
    <property type="evidence" value="ECO:0007669"/>
    <property type="project" value="UniProtKB-UniRule"/>
</dbReference>
<dbReference type="GO" id="GO:0000049">
    <property type="term" value="F:tRNA binding"/>
    <property type="evidence" value="ECO:0007669"/>
    <property type="project" value="UniProtKB-UniRule"/>
</dbReference>
<dbReference type="GO" id="GO:0042245">
    <property type="term" value="P:RNA repair"/>
    <property type="evidence" value="ECO:0007669"/>
    <property type="project" value="UniProtKB-KW"/>
</dbReference>
<dbReference type="GO" id="GO:0001680">
    <property type="term" value="P:tRNA 3'-terminal CCA addition"/>
    <property type="evidence" value="ECO:0007669"/>
    <property type="project" value="UniProtKB-UniRule"/>
</dbReference>
<dbReference type="CDD" id="cd05400">
    <property type="entry name" value="NT_2-5OAS_ClassI-CCAase"/>
    <property type="match status" value="1"/>
</dbReference>
<dbReference type="Gene3D" id="3.30.70.1550">
    <property type="entry name" value="Archaeal tRNA CCA-adding enzyme catalytic domain"/>
    <property type="match status" value="1"/>
</dbReference>
<dbReference type="Gene3D" id="3.30.460.10">
    <property type="entry name" value="Beta Polymerase, domain 2"/>
    <property type="match status" value="1"/>
</dbReference>
<dbReference type="Gene3D" id="1.10.1410.30">
    <property type="entry name" value="CCA tRNA nucleotidyltransferase, domain 2"/>
    <property type="match status" value="1"/>
</dbReference>
<dbReference type="Gene3D" id="3.30.70.590">
    <property type="entry name" value="Poly(A) polymerase predicted RNA binding domain"/>
    <property type="match status" value="1"/>
</dbReference>
<dbReference type="HAMAP" id="MF_01264">
    <property type="entry name" value="CCA_arch"/>
    <property type="match status" value="1"/>
</dbReference>
<dbReference type="InterPro" id="IPR048833">
    <property type="entry name" value="CAA_C"/>
</dbReference>
<dbReference type="InterPro" id="IPR008229">
    <property type="entry name" value="CCA-adding_arc"/>
</dbReference>
<dbReference type="InterPro" id="IPR042090">
    <property type="entry name" value="CCA_tRNA_nucleotrans_2"/>
</dbReference>
<dbReference type="InterPro" id="IPR006116">
    <property type="entry name" value="NT_2-5OAS_ClassI-CCAase"/>
</dbReference>
<dbReference type="InterPro" id="IPR043519">
    <property type="entry name" value="NT_sf"/>
</dbReference>
<dbReference type="InterPro" id="IPR011068">
    <property type="entry name" value="NuclTrfase_I-like_C"/>
</dbReference>
<dbReference type="InterPro" id="IPR002934">
    <property type="entry name" value="Polymerase_NTP_transf_dom"/>
</dbReference>
<dbReference type="InterPro" id="IPR015329">
    <property type="entry name" value="tRNA_NucTransf2"/>
</dbReference>
<dbReference type="NCBIfam" id="TIGR03671">
    <property type="entry name" value="cca_archaeal"/>
    <property type="match status" value="1"/>
</dbReference>
<dbReference type="PANTHER" id="PTHR39643">
    <property type="entry name" value="CCA-ADDING ENZYME"/>
    <property type="match status" value="1"/>
</dbReference>
<dbReference type="PANTHER" id="PTHR39643:SF1">
    <property type="entry name" value="CCA-ADDING ENZYME"/>
    <property type="match status" value="1"/>
</dbReference>
<dbReference type="Pfam" id="PF21133">
    <property type="entry name" value="CAA_C"/>
    <property type="match status" value="1"/>
</dbReference>
<dbReference type="Pfam" id="PF01909">
    <property type="entry name" value="NTP_transf_2"/>
    <property type="match status" value="1"/>
</dbReference>
<dbReference type="Pfam" id="PF09249">
    <property type="entry name" value="tRNA_NucTransf2"/>
    <property type="match status" value="1"/>
</dbReference>
<dbReference type="PIRSF" id="PIRSF005335">
    <property type="entry name" value="CCA_arch"/>
    <property type="match status" value="1"/>
</dbReference>
<dbReference type="SUPFAM" id="SSF81301">
    <property type="entry name" value="Nucleotidyltransferase"/>
    <property type="match status" value="1"/>
</dbReference>
<dbReference type="SUPFAM" id="SSF55003">
    <property type="entry name" value="PAP/Archaeal CCA-adding enzyme, C-terminal domain"/>
    <property type="match status" value="1"/>
</dbReference>
<dbReference type="SUPFAM" id="SSF81631">
    <property type="entry name" value="PAP/OAS1 substrate-binding domain"/>
    <property type="match status" value="1"/>
</dbReference>
<feature type="chain" id="PRO_1000054347" description="CCA-adding enzyme">
    <location>
        <begin position="1"/>
        <end position="460"/>
    </location>
</feature>
<feature type="binding site" evidence="1">
    <location>
        <position position="50"/>
    </location>
    <ligand>
        <name>ATP</name>
        <dbReference type="ChEBI" id="CHEBI:30616"/>
    </ligand>
</feature>
<feature type="binding site" evidence="1">
    <location>
        <position position="50"/>
    </location>
    <ligand>
        <name>CTP</name>
        <dbReference type="ChEBI" id="CHEBI:37563"/>
    </ligand>
</feature>
<feature type="binding site" evidence="1">
    <location>
        <position position="53"/>
    </location>
    <ligand>
        <name>ATP</name>
        <dbReference type="ChEBI" id="CHEBI:30616"/>
    </ligand>
</feature>
<feature type="binding site" evidence="1">
    <location>
        <position position="53"/>
    </location>
    <ligand>
        <name>CTP</name>
        <dbReference type="ChEBI" id="CHEBI:37563"/>
    </ligand>
</feature>
<feature type="binding site" evidence="1">
    <location>
        <position position="62"/>
    </location>
    <ligand>
        <name>Mg(2+)</name>
        <dbReference type="ChEBI" id="CHEBI:18420"/>
    </ligand>
</feature>
<feature type="binding site" evidence="1">
    <location>
        <position position="64"/>
    </location>
    <ligand>
        <name>Mg(2+)</name>
        <dbReference type="ChEBI" id="CHEBI:18420"/>
    </ligand>
</feature>
<feature type="binding site" evidence="1">
    <location>
        <position position="117"/>
    </location>
    <ligand>
        <name>Mg(2+)</name>
        <dbReference type="ChEBI" id="CHEBI:18420"/>
    </ligand>
</feature>
<feature type="binding site" evidence="1">
    <location>
        <position position="140"/>
    </location>
    <ligand>
        <name>ATP</name>
        <dbReference type="ChEBI" id="CHEBI:30616"/>
    </ligand>
</feature>
<feature type="binding site" evidence="1">
    <location>
        <position position="140"/>
    </location>
    <ligand>
        <name>CTP</name>
        <dbReference type="ChEBI" id="CHEBI:37563"/>
    </ligand>
</feature>
<feature type="binding site" evidence="1">
    <location>
        <position position="159"/>
    </location>
    <ligand>
        <name>ATP</name>
        <dbReference type="ChEBI" id="CHEBI:30616"/>
    </ligand>
</feature>
<feature type="binding site" evidence="1">
    <location>
        <position position="159"/>
    </location>
    <ligand>
        <name>CTP</name>
        <dbReference type="ChEBI" id="CHEBI:37563"/>
    </ligand>
</feature>
<feature type="binding site" evidence="1">
    <location>
        <position position="168"/>
    </location>
    <ligand>
        <name>ATP</name>
        <dbReference type="ChEBI" id="CHEBI:30616"/>
    </ligand>
</feature>
<feature type="binding site" evidence="1">
    <location>
        <position position="168"/>
    </location>
    <ligand>
        <name>CTP</name>
        <dbReference type="ChEBI" id="CHEBI:37563"/>
    </ligand>
</feature>
<evidence type="ECO:0000255" key="1">
    <source>
        <dbReference type="HAMAP-Rule" id="MF_01264"/>
    </source>
</evidence>
<gene>
    <name evidence="1" type="primary">cca</name>
    <name type="ordered locus">Mboo_1706</name>
</gene>
<protein>
    <recommendedName>
        <fullName evidence="1">CCA-adding enzyme</fullName>
        <ecNumber evidence="1">2.7.7.72</ecNumber>
    </recommendedName>
    <alternativeName>
        <fullName evidence="1">CCA tRNA nucleotidyltransferase</fullName>
    </alternativeName>
    <alternativeName>
        <fullName evidence="1">tRNA CCA-pyrophosphorylase</fullName>
    </alternativeName>
    <alternativeName>
        <fullName evidence="1">tRNA adenylyl-/cytidylyl- transferase</fullName>
    </alternativeName>
    <alternativeName>
        <fullName evidence="1">tRNA nucleotidyltransferase</fullName>
    </alternativeName>
    <alternativeName>
        <fullName evidence="1">tRNA-NT</fullName>
    </alternativeName>
</protein>
<comment type="function">
    <text evidence="1">Catalyzes the addition and repair of the essential 3'-terminal CCA sequence in tRNAs without using a nucleic acid template. Adds these three nucleotides in the order of C, C, and A to the tRNA nucleotide-73, using CTP and ATP as substrates and producing inorganic pyrophosphate. tRNA 3'-terminal CCA addition is required both for tRNA processing and repair. Also involved in tRNA surveillance by mediating tandem CCA addition to generate a CCACCA at the 3' terminus of unstable tRNAs. While stable tRNAs receive only 3'-terminal CCA, unstable tRNAs are marked with CCACCA and rapidly degraded.</text>
</comment>
<comment type="catalytic activity">
    <reaction evidence="1">
        <text>a tRNA precursor + 2 CTP + ATP = a tRNA with a 3' CCA end + 3 diphosphate</text>
        <dbReference type="Rhea" id="RHEA:14433"/>
        <dbReference type="Rhea" id="RHEA-COMP:10465"/>
        <dbReference type="Rhea" id="RHEA-COMP:10468"/>
        <dbReference type="ChEBI" id="CHEBI:30616"/>
        <dbReference type="ChEBI" id="CHEBI:33019"/>
        <dbReference type="ChEBI" id="CHEBI:37563"/>
        <dbReference type="ChEBI" id="CHEBI:74896"/>
        <dbReference type="ChEBI" id="CHEBI:83071"/>
        <dbReference type="EC" id="2.7.7.72"/>
    </reaction>
</comment>
<comment type="catalytic activity">
    <reaction evidence="1">
        <text>a tRNA with a 3' CCA end + 2 CTP + ATP = a tRNA with a 3' CCACCA end + 3 diphosphate</text>
        <dbReference type="Rhea" id="RHEA:76235"/>
        <dbReference type="Rhea" id="RHEA-COMP:10468"/>
        <dbReference type="Rhea" id="RHEA-COMP:18655"/>
        <dbReference type="ChEBI" id="CHEBI:30616"/>
        <dbReference type="ChEBI" id="CHEBI:33019"/>
        <dbReference type="ChEBI" id="CHEBI:37563"/>
        <dbReference type="ChEBI" id="CHEBI:83071"/>
        <dbReference type="ChEBI" id="CHEBI:195187"/>
    </reaction>
    <physiologicalReaction direction="left-to-right" evidence="1">
        <dbReference type="Rhea" id="RHEA:76236"/>
    </physiologicalReaction>
</comment>
<comment type="cofactor">
    <cofactor evidence="1">
        <name>Mg(2+)</name>
        <dbReference type="ChEBI" id="CHEBI:18420"/>
    </cofactor>
</comment>
<comment type="subunit">
    <text evidence="1">Homodimer.</text>
</comment>
<comment type="miscellaneous">
    <text evidence="1">A single active site specifically recognizes both ATP and CTP and is responsible for their addition.</text>
</comment>
<comment type="similarity">
    <text evidence="1">Belongs to the tRNA nucleotidyltransferase/poly(A) polymerase family. Archaeal CCA-adding enzyme subfamily.</text>
</comment>
<keyword id="KW-0067">ATP-binding</keyword>
<keyword id="KW-0460">Magnesium</keyword>
<keyword id="KW-0479">Metal-binding</keyword>
<keyword id="KW-0547">Nucleotide-binding</keyword>
<keyword id="KW-0548">Nucleotidyltransferase</keyword>
<keyword id="KW-1185">Reference proteome</keyword>
<keyword id="KW-0692">RNA repair</keyword>
<keyword id="KW-0694">RNA-binding</keyword>
<keyword id="KW-0808">Transferase</keyword>
<keyword id="KW-0819">tRNA processing</keyword>
<proteinExistence type="inferred from homology"/>
<name>CCA_METB6</name>